<keyword id="KW-0408">Iron</keyword>
<keyword id="KW-0479">Metal-binding</keyword>
<keyword id="KW-0511">Multifunctional enzyme</keyword>
<keyword id="KW-0520">NAD</keyword>
<keyword id="KW-0560">Oxidoreductase</keyword>
<keyword id="KW-1185">Reference proteome</keyword>
<keyword id="KW-0843">Virulence</keyword>
<evidence type="ECO:0000250" key="1">
    <source>
        <dbReference type="UniProtKB" id="A0A0H2ZM56"/>
    </source>
</evidence>
<evidence type="ECO:0000250" key="2">
    <source>
        <dbReference type="UniProtKB" id="P0A9Q7"/>
    </source>
</evidence>
<evidence type="ECO:0000250" key="3">
    <source>
        <dbReference type="UniProtKB" id="P0A9Q8"/>
    </source>
</evidence>
<evidence type="ECO:0000250" key="4">
    <source>
        <dbReference type="UniProtKB" id="P33744"/>
    </source>
</evidence>
<evidence type="ECO:0000250" key="5">
    <source>
        <dbReference type="UniProtKB" id="Q9HTJ1"/>
    </source>
</evidence>
<evidence type="ECO:0000255" key="6"/>
<evidence type="ECO:0000255" key="7">
    <source>
        <dbReference type="PIRNR" id="PIRNR000111"/>
    </source>
</evidence>
<evidence type="ECO:0000269" key="8">
    <source>
    </source>
</evidence>
<evidence type="ECO:0000305" key="9"/>
<evidence type="ECO:0000312" key="10">
    <source>
        <dbReference type="EMBL" id="AAK76091.1"/>
    </source>
</evidence>
<evidence type="ECO:0000312" key="11">
    <source>
        <dbReference type="Proteomes" id="UP000000585"/>
    </source>
</evidence>
<reference evidence="11" key="1">
    <citation type="journal article" date="2001" name="Science">
        <title>Complete genome sequence of a virulent isolate of Streptococcus pneumoniae.</title>
        <authorList>
            <person name="Tettelin H."/>
            <person name="Nelson K.E."/>
            <person name="Paulsen I.T."/>
            <person name="Eisen J.A."/>
            <person name="Read T.D."/>
            <person name="Peterson S.N."/>
            <person name="Heidelberg J.F."/>
            <person name="DeBoy R.T."/>
            <person name="Haft D.H."/>
            <person name="Dodson R.J."/>
            <person name="Durkin A.S."/>
            <person name="Gwinn M.L."/>
            <person name="Kolonay J.F."/>
            <person name="Nelson W.C."/>
            <person name="Peterson J.D."/>
            <person name="Umayam L.A."/>
            <person name="White O."/>
            <person name="Salzberg S.L."/>
            <person name="Lewis M.R."/>
            <person name="Radune D."/>
            <person name="Holtzapple E.K."/>
            <person name="Khouri H.M."/>
            <person name="Wolf A.M."/>
            <person name="Utterback T.R."/>
            <person name="Hansen C.L."/>
            <person name="McDonald L.A."/>
            <person name="Feldblyum T.V."/>
            <person name="Angiuoli S.V."/>
            <person name="Dickinson T."/>
            <person name="Hickey E.K."/>
            <person name="Holt I.E."/>
            <person name="Loftus B.J."/>
            <person name="Yang F."/>
            <person name="Smith H.O."/>
            <person name="Venter J.C."/>
            <person name="Dougherty B.A."/>
            <person name="Morrison D.A."/>
            <person name="Hollingshead S.K."/>
            <person name="Fraser C.M."/>
        </authorList>
    </citation>
    <scope>NUCLEOTIDE SEQUENCE [LARGE SCALE GENOMIC DNA]</scope>
    <source>
        <strain evidence="11">ATCC BAA-334 / TIGR4</strain>
    </source>
</reference>
<reference evidence="9" key="2">
    <citation type="journal article" date="2023" name="PLoS Biol.">
        <title>Targeting NAD+ regeneration enhances antibiotic susceptibility of Streptococcus pneumoniae during invasive disease.</title>
        <authorList>
            <person name="Im H."/>
            <person name="Pearson M.L."/>
            <person name="Martinez E."/>
            <person name="Cichos K.H."/>
            <person name="Song X."/>
            <person name="Kruckow K.L."/>
            <person name="Andrews R.M."/>
            <person name="Ghanem E.S."/>
            <person name="Orihuela C.J."/>
        </authorList>
    </citation>
    <scope>DISRUPTION PHENOTYPE</scope>
    <scope>IDENTIFICATION AS A DRUG TARGET</scope>
</reference>
<feature type="chain" id="PRO_0000458482" description="Aldehyde-alcohol dehydrogenase">
    <location>
        <begin position="1"/>
        <end position="883"/>
    </location>
</feature>
<feature type="region of interest" description="Aldehyde dehydrogenase" evidence="2">
    <location>
        <begin position="13"/>
        <end position="456"/>
    </location>
</feature>
<feature type="region of interest" description="Linker" evidence="2">
    <location>
        <begin position="457"/>
        <end position="464"/>
    </location>
</feature>
<feature type="active site" description="Nucleophile" evidence="5">
    <location>
        <position position="257"/>
    </location>
</feature>
<feature type="binding site" evidence="2">
    <location>
        <begin position="121"/>
        <end position="126"/>
    </location>
    <ligand>
        <name>NAD(+)</name>
        <dbReference type="ChEBI" id="CHEBI:57540"/>
        <label>1</label>
    </ligand>
</feature>
<feature type="binding site" evidence="2">
    <location>
        <position position="206"/>
    </location>
    <ligand>
        <name>NAD(+)</name>
        <dbReference type="ChEBI" id="CHEBI:57540"/>
        <label>1</label>
    </ligand>
</feature>
<feature type="binding site" evidence="2">
    <location>
        <position position="224"/>
    </location>
    <ligand>
        <name>NAD(+)</name>
        <dbReference type="ChEBI" id="CHEBI:57540"/>
        <label>1</label>
    </ligand>
</feature>
<feature type="binding site" evidence="2">
    <location>
        <position position="355"/>
    </location>
    <ligand>
        <name>NAD(+)</name>
        <dbReference type="ChEBI" id="CHEBI:57540"/>
        <label>1</label>
    </ligand>
</feature>
<feature type="binding site" evidence="2">
    <location>
        <position position="435"/>
    </location>
    <ligand>
        <name>NAD(+)</name>
        <dbReference type="ChEBI" id="CHEBI:57540"/>
        <label>1</label>
    </ligand>
</feature>
<feature type="binding site" evidence="6">
    <location>
        <begin position="438"/>
        <end position="443"/>
    </location>
    <ligand>
        <name>NAD(+)</name>
        <dbReference type="ChEBI" id="CHEBI:57540"/>
    </ligand>
</feature>
<feature type="binding site" evidence="3">
    <location>
        <position position="500"/>
    </location>
    <ligand>
        <name>NAD(+)</name>
        <dbReference type="ChEBI" id="CHEBI:57540"/>
        <label>2</label>
    </ligand>
</feature>
<feature type="binding site" evidence="3">
    <location>
        <position position="534"/>
    </location>
    <ligand>
        <name>NAD(+)</name>
        <dbReference type="ChEBI" id="CHEBI:57540"/>
        <label>2</label>
    </ligand>
</feature>
<feature type="binding site" evidence="3">
    <location>
        <begin position="561"/>
        <end position="565"/>
    </location>
    <ligand>
        <name>NAD(+)</name>
        <dbReference type="ChEBI" id="CHEBI:57540"/>
        <label>2</label>
    </ligand>
</feature>
<feature type="binding site" evidence="3">
    <location>
        <begin position="612"/>
        <end position="613"/>
    </location>
    <ligand>
        <name>NAD(+)</name>
        <dbReference type="ChEBI" id="CHEBI:57540"/>
        <label>2</label>
    </ligand>
</feature>
<feature type="binding site" evidence="2">
    <location>
        <position position="625"/>
    </location>
    <ligand>
        <name>NAD(+)</name>
        <dbReference type="ChEBI" id="CHEBI:57540"/>
        <label>2</label>
    </ligand>
</feature>
<feature type="binding site" evidence="2">
    <location>
        <position position="634"/>
    </location>
    <ligand>
        <name>NAD(+)</name>
        <dbReference type="ChEBI" id="CHEBI:57540"/>
        <label>2</label>
    </ligand>
</feature>
<feature type="binding site" evidence="3">
    <location>
        <position position="653"/>
    </location>
    <ligand>
        <name>NAD(+)</name>
        <dbReference type="ChEBI" id="CHEBI:57540"/>
        <label>2</label>
    </ligand>
</feature>
<feature type="binding site" evidence="3">
    <location>
        <position position="668"/>
    </location>
    <ligand>
        <name>Fe cation</name>
        <dbReference type="ChEBI" id="CHEBI:24875"/>
    </ligand>
</feature>
<feature type="binding site" evidence="3">
    <location>
        <position position="672"/>
    </location>
    <ligand>
        <name>Fe cation</name>
        <dbReference type="ChEBI" id="CHEBI:24875"/>
    </ligand>
</feature>
<feature type="binding site" evidence="3">
    <location>
        <position position="736"/>
    </location>
    <ligand>
        <name>Fe cation</name>
        <dbReference type="ChEBI" id="CHEBI:24875"/>
    </ligand>
</feature>
<feature type="binding site" evidence="3">
    <location>
        <position position="750"/>
    </location>
    <ligand>
        <name>Fe cation</name>
        <dbReference type="ChEBI" id="CHEBI:24875"/>
    </ligand>
</feature>
<gene>
    <name evidence="1" type="primary">adhE</name>
    <name evidence="10" type="ordered locus">SP_2026</name>
</gene>
<comment type="function">
    <text evidence="1 4">Has alcohol dehydrogenase activity (By similarity). Has aldehyde dehydrogenase activity (By similarity). May play a role in enhancing virulence in mice. May be considered a potential virulence factor (By similarity).</text>
</comment>
<comment type="catalytic activity">
    <reaction evidence="1">
        <text>ethanol + NAD(+) = acetaldehyde + NADH + H(+)</text>
        <dbReference type="Rhea" id="RHEA:25290"/>
        <dbReference type="ChEBI" id="CHEBI:15343"/>
        <dbReference type="ChEBI" id="CHEBI:15378"/>
        <dbReference type="ChEBI" id="CHEBI:16236"/>
        <dbReference type="ChEBI" id="CHEBI:57540"/>
        <dbReference type="ChEBI" id="CHEBI:57945"/>
        <dbReference type="EC" id="1.1.1.1"/>
    </reaction>
</comment>
<comment type="catalytic activity">
    <reaction evidence="4">
        <text>an aldehyde + NAD(+) + H2O = a carboxylate + NADH + 2 H(+)</text>
        <dbReference type="Rhea" id="RHEA:16185"/>
        <dbReference type="ChEBI" id="CHEBI:15377"/>
        <dbReference type="ChEBI" id="CHEBI:15378"/>
        <dbReference type="ChEBI" id="CHEBI:17478"/>
        <dbReference type="ChEBI" id="CHEBI:29067"/>
        <dbReference type="ChEBI" id="CHEBI:57540"/>
        <dbReference type="ChEBI" id="CHEBI:57945"/>
        <dbReference type="EC" id="1.2.1.3"/>
    </reaction>
</comment>
<comment type="cofactor">
    <cofactor evidence="2">
        <name>Fe(2+)</name>
        <dbReference type="ChEBI" id="CHEBI:29033"/>
    </cofactor>
</comment>
<comment type="domain">
    <text evidence="2">Contains an N-terminal aldehyde dehydrogenase (ALDH) domain and a C-terminal iron-dependent alcohol dehydrogenase (ADH) domain, interconnected by a short linker.</text>
</comment>
<comment type="disruption phenotype">
    <text evidence="8">Reduction of 29.3%, in total NAD(H) pool, and 11.1% increase in the NAD+/NADH ratio (PubMed:36928033). Significant, but modest, reduction in the ATP pool, and extends lag phase during growth (PubMed:36928033). Increases susceptibility to gentamicin, but not erythromycin, chloramphenicol, rifampicin, penicillin and vancomycin (PubMed:36928033). Reduces production of the bacterial capsule (PubMed:36928033). Simultaneous disruption of alcohol dehydrogense adh resulted in similar growth rate, ATP level, and survival rate after erythromycin exposure (PubMed:36928033).</text>
</comment>
<comment type="miscellaneous">
    <text evidence="8">Fomepizole, an FDA-approved inhibitor of alcohol dehydrogenase, causes redox imbalance and enhances susceptibility to antibiotics, in vitro (PubMed:36928033). It also works alongside erythromycin to enhance killing of bacteria in vivo (PubMed:36928033). This suggests the potential of fomepizole, and related molecules, as adjuvants to antibiotics (PubMed:36928033).</text>
</comment>
<comment type="similarity">
    <text evidence="9">In the N-terminal section; belongs to the aldehyde dehydrogenase family.</text>
</comment>
<comment type="similarity">
    <text evidence="9">In the C-terminal section; belongs to the iron-containing alcohol dehydrogenase family.</text>
</comment>
<organism evidence="11">
    <name type="scientific">Streptococcus pneumoniae serotype 4 (strain ATCC BAA-334 / TIGR4)</name>
    <dbReference type="NCBI Taxonomy" id="170187"/>
    <lineage>
        <taxon>Bacteria</taxon>
        <taxon>Bacillati</taxon>
        <taxon>Bacillota</taxon>
        <taxon>Bacilli</taxon>
        <taxon>Lactobacillales</taxon>
        <taxon>Streptococcaceae</taxon>
        <taxon>Streptococcus</taxon>
    </lineage>
</organism>
<accession>A0A0H2URT2</accession>
<proteinExistence type="inferred from homology"/>
<sequence length="883" mass="97286">MADKKTVTPEEKKLVAEKHVDELVQKALVALEEMRKLDQEQVDYIVAKASVAALDAHGELALHAFEETGRGVFEDKATKNLFACEHVVNNMRHTKTVGVIEEDDVTGLTLIAEPVGVVCGITPTTNPTSTAIFKSLISLKTRNPIVFAFHPSAQESSAHAARIVRDAAIAAGAPENCVQWITQPSMEATSALMNHEGVATILATGGNAMVKAAYSCGKPALGVGAGNVPAYVEKSANIRQAAHDIVMSKSFDNGMVCASEQAVIIDKEIYDEFVAEFKSYHTYFVNKKEKALLEEFCFGVKANSKNCAGAKLNADIVGKPATWIAEQAGFTVPEGTNILAAECKEVGENEPLTREKLSPVIAVLKSESREDGITKARQMVEFNGLGHSAAIHTADEELTKEFGKAVKAIRVICNSPSTFGGIGDVYNAFLPSLTLGCGSYGRNSVGDNVSAINLLNIKKVGRRRNNMQWMKLPSKTYFERDSIQYLQKCRDVERVMIVTDHAMVELGFLDRIIEQLDLRRNKVVYQIFADVEPDPDITTVNRGTEIMRAFKPDTIIALGGGSPMDAAKVMWLFYEQPEVDFRDLVQKFMDIRKRAFKFPLLGKKTKFIAIPTTSGTGSEVTPFAVISDKANNRKYPIADYSLTPTVAIVDPALVLTVPGFVAADTGMDVLTHATEAYVSQMASDYTDGLALQAIKLVFENLESSVKNADFHSREKMHNASTIAGMAFANAFLGISHSMAHKIGAQFHTIHGRTNAILLPYVIRYNGTRPAKTATWPKYNYYRADEKYQDIARMLGLPASTPEEGVESYAKAVYELGERIGIQMNFRDQGIDEKEWKEHSRKLAFLAYEDQCSPANPRLPMVDHMQEIIEDAYYGYKERPGRRK</sequence>
<dbReference type="EC" id="1.1.1.1" evidence="1"/>
<dbReference type="EC" id="1.2.1.3" evidence="4"/>
<dbReference type="EMBL" id="AE005672">
    <property type="protein sequence ID" value="AAK76091.1"/>
    <property type="molecule type" value="Genomic_DNA"/>
</dbReference>
<dbReference type="RefSeq" id="WP_000763969.1">
    <property type="nucleotide sequence ID" value="NZ_CP155539.1"/>
</dbReference>
<dbReference type="SMR" id="A0A0H2URT2"/>
<dbReference type="PaxDb" id="170187-SP_2026"/>
<dbReference type="EnsemblBacteria" id="AAK76091">
    <property type="protein sequence ID" value="AAK76091"/>
    <property type="gene ID" value="SP_2026"/>
</dbReference>
<dbReference type="KEGG" id="spn:SP_2026"/>
<dbReference type="eggNOG" id="COG1012">
    <property type="taxonomic scope" value="Bacteria"/>
</dbReference>
<dbReference type="eggNOG" id="COG1454">
    <property type="taxonomic scope" value="Bacteria"/>
</dbReference>
<dbReference type="PhylomeDB" id="A0A0H2URT2"/>
<dbReference type="BioCyc" id="SPNE170187:G1FZB-2096-MONOMER"/>
<dbReference type="Proteomes" id="UP000000585">
    <property type="component" value="Chromosome"/>
</dbReference>
<dbReference type="GO" id="GO:0008774">
    <property type="term" value="F:acetaldehyde dehydrogenase (acetylating) activity"/>
    <property type="evidence" value="ECO:0007669"/>
    <property type="project" value="InterPro"/>
</dbReference>
<dbReference type="GO" id="GO:0004029">
    <property type="term" value="F:aldehyde dehydrogenase (NAD+) activity"/>
    <property type="evidence" value="ECO:0007669"/>
    <property type="project" value="RHEA"/>
</dbReference>
<dbReference type="GO" id="GO:0120542">
    <property type="term" value="F:ethanol dehydrogenase (NAD+) activity"/>
    <property type="evidence" value="ECO:0007669"/>
    <property type="project" value="RHEA"/>
</dbReference>
<dbReference type="GO" id="GO:0046872">
    <property type="term" value="F:metal ion binding"/>
    <property type="evidence" value="ECO:0007669"/>
    <property type="project" value="UniProtKB-KW"/>
</dbReference>
<dbReference type="GO" id="GO:0006066">
    <property type="term" value="P:alcohol metabolic process"/>
    <property type="evidence" value="ECO:0007669"/>
    <property type="project" value="InterPro"/>
</dbReference>
<dbReference type="GO" id="GO:0015976">
    <property type="term" value="P:carbon utilization"/>
    <property type="evidence" value="ECO:0007669"/>
    <property type="project" value="InterPro"/>
</dbReference>
<dbReference type="CDD" id="cd08178">
    <property type="entry name" value="AAD_C"/>
    <property type="match status" value="1"/>
</dbReference>
<dbReference type="CDD" id="cd07122">
    <property type="entry name" value="ALDH_F20_ACDH"/>
    <property type="match status" value="1"/>
</dbReference>
<dbReference type="FunFam" id="1.20.1090.10:FF:000001">
    <property type="entry name" value="Aldehyde-alcohol dehydrogenase"/>
    <property type="match status" value="1"/>
</dbReference>
<dbReference type="FunFam" id="3.40.309.10:FF:000007">
    <property type="entry name" value="Aldehyde-alcohol dehydrogenase"/>
    <property type="match status" value="1"/>
</dbReference>
<dbReference type="FunFam" id="3.40.50.1970:FF:000002">
    <property type="entry name" value="Aldehyde-alcohol dehydrogenase"/>
    <property type="match status" value="1"/>
</dbReference>
<dbReference type="Gene3D" id="3.40.50.1970">
    <property type="match status" value="1"/>
</dbReference>
<dbReference type="Gene3D" id="3.40.605.10">
    <property type="entry name" value="Aldehyde Dehydrogenase, Chain A, domain 1"/>
    <property type="match status" value="1"/>
</dbReference>
<dbReference type="Gene3D" id="3.40.309.10">
    <property type="entry name" value="Aldehyde Dehydrogenase, Chain A, domain 2"/>
    <property type="match status" value="1"/>
</dbReference>
<dbReference type="Gene3D" id="1.20.1090.10">
    <property type="entry name" value="Dehydroquinate synthase-like - alpha domain"/>
    <property type="match status" value="1"/>
</dbReference>
<dbReference type="InterPro" id="IPR034789">
    <property type="entry name" value="AAD_C"/>
</dbReference>
<dbReference type="InterPro" id="IPR001670">
    <property type="entry name" value="ADH_Fe/GldA"/>
</dbReference>
<dbReference type="InterPro" id="IPR056798">
    <property type="entry name" value="ADH_Fe_C"/>
</dbReference>
<dbReference type="InterPro" id="IPR018211">
    <property type="entry name" value="ADH_Fe_CS"/>
</dbReference>
<dbReference type="InterPro" id="IPR039697">
    <property type="entry name" value="Alcohol_dehydrogenase_Fe"/>
</dbReference>
<dbReference type="InterPro" id="IPR016161">
    <property type="entry name" value="Ald_DH/histidinol_DH"/>
</dbReference>
<dbReference type="InterPro" id="IPR016163">
    <property type="entry name" value="Ald_DH_C"/>
</dbReference>
<dbReference type="InterPro" id="IPR016162">
    <property type="entry name" value="Ald_DH_N"/>
</dbReference>
<dbReference type="InterPro" id="IPR015590">
    <property type="entry name" value="Aldehyde_DH_dom"/>
</dbReference>
<dbReference type="InterPro" id="IPR012079">
    <property type="entry name" value="Bifunc_Ald-ADH"/>
</dbReference>
<dbReference type="NCBIfam" id="NF010378">
    <property type="entry name" value="PRK13805.1"/>
    <property type="match status" value="1"/>
</dbReference>
<dbReference type="PANTHER" id="PTHR11496">
    <property type="entry name" value="ALCOHOL DEHYDROGENASE"/>
    <property type="match status" value="1"/>
</dbReference>
<dbReference type="PANTHER" id="PTHR11496:SF83">
    <property type="entry name" value="HYDROXYACID-OXOACID TRANSHYDROGENASE, MITOCHONDRIAL"/>
    <property type="match status" value="1"/>
</dbReference>
<dbReference type="Pfam" id="PF25137">
    <property type="entry name" value="ADH_Fe_C"/>
    <property type="match status" value="1"/>
</dbReference>
<dbReference type="Pfam" id="PF00171">
    <property type="entry name" value="Aldedh"/>
    <property type="match status" value="1"/>
</dbReference>
<dbReference type="Pfam" id="PF00465">
    <property type="entry name" value="Fe-ADH"/>
    <property type="match status" value="1"/>
</dbReference>
<dbReference type="PIRSF" id="PIRSF000111">
    <property type="entry name" value="ALDH_ADH"/>
    <property type="match status" value="1"/>
</dbReference>
<dbReference type="SUPFAM" id="SSF53720">
    <property type="entry name" value="ALDH-like"/>
    <property type="match status" value="1"/>
</dbReference>
<dbReference type="SUPFAM" id="SSF56796">
    <property type="entry name" value="Dehydroquinate synthase-like"/>
    <property type="match status" value="1"/>
</dbReference>
<dbReference type="PROSITE" id="PS00913">
    <property type="entry name" value="ADH_IRON_1"/>
    <property type="match status" value="1"/>
</dbReference>
<dbReference type="PROSITE" id="PS00060">
    <property type="entry name" value="ADH_IRON_2"/>
    <property type="match status" value="1"/>
</dbReference>
<protein>
    <recommendedName>
        <fullName evidence="7">Aldehyde-alcohol dehydrogenase</fullName>
    </recommendedName>
    <domain>
        <recommendedName>
            <fullName evidence="1">Alcohol dehydrogenase</fullName>
            <shortName evidence="1">ADH</shortName>
            <ecNumber evidence="1">1.1.1.1</ecNumber>
        </recommendedName>
    </domain>
    <domain>
        <recommendedName>
            <fullName evidence="4">Aldehyde dehydrogenase</fullName>
            <shortName evidence="4">ALDH</shortName>
            <ecNumber evidence="4">1.2.1.3</ecNumber>
        </recommendedName>
    </domain>
</protein>
<name>ADHE_STRPN</name>